<name>BYST_NEMVE</name>
<organism>
    <name type="scientific">Nematostella vectensis</name>
    <name type="common">Starlet sea anemone</name>
    <dbReference type="NCBI Taxonomy" id="45351"/>
    <lineage>
        <taxon>Eukaryota</taxon>
        <taxon>Metazoa</taxon>
        <taxon>Cnidaria</taxon>
        <taxon>Anthozoa</taxon>
        <taxon>Hexacorallia</taxon>
        <taxon>Actiniaria</taxon>
        <taxon>Edwardsiidae</taxon>
        <taxon>Nematostella</taxon>
    </lineage>
</organism>
<accession>A7S7F2</accession>
<dbReference type="EMBL" id="DS469592">
    <property type="protein sequence ID" value="EDO40390.1"/>
    <property type="molecule type" value="Genomic_DNA"/>
</dbReference>
<dbReference type="RefSeq" id="XP_001632453.1">
    <property type="nucleotide sequence ID" value="XM_001632403.1"/>
</dbReference>
<dbReference type="SMR" id="A7S7F2"/>
<dbReference type="STRING" id="45351.A7S7F2"/>
<dbReference type="EnsemblMetazoa" id="EDO40390">
    <property type="protein sequence ID" value="EDO40390"/>
    <property type="gene ID" value="NEMVEDRAFT_v1g167370"/>
</dbReference>
<dbReference type="KEGG" id="nve:5512119"/>
<dbReference type="eggNOG" id="KOG3871">
    <property type="taxonomic scope" value="Eukaryota"/>
</dbReference>
<dbReference type="HOGENOM" id="CLU_029727_0_1_1"/>
<dbReference type="InParanoid" id="A7S7F2"/>
<dbReference type="OMA" id="TKLPVIW"/>
<dbReference type="PhylomeDB" id="A7S7F2"/>
<dbReference type="Proteomes" id="UP000001593">
    <property type="component" value="Unassembled WGS sequence"/>
</dbReference>
<dbReference type="GO" id="GO:0005737">
    <property type="term" value="C:cytoplasm"/>
    <property type="evidence" value="ECO:0000318"/>
    <property type="project" value="GO_Central"/>
</dbReference>
<dbReference type="GO" id="GO:0005730">
    <property type="term" value="C:nucleolus"/>
    <property type="evidence" value="ECO:0000318"/>
    <property type="project" value="GO_Central"/>
</dbReference>
<dbReference type="GO" id="GO:0030688">
    <property type="term" value="C:preribosome, small subunit precursor"/>
    <property type="evidence" value="ECO:0000318"/>
    <property type="project" value="GO_Central"/>
</dbReference>
<dbReference type="GO" id="GO:0030515">
    <property type="term" value="F:snoRNA binding"/>
    <property type="evidence" value="ECO:0000318"/>
    <property type="project" value="GO_Central"/>
</dbReference>
<dbReference type="GO" id="GO:0006364">
    <property type="term" value="P:rRNA processing"/>
    <property type="evidence" value="ECO:0000318"/>
    <property type="project" value="GO_Central"/>
</dbReference>
<dbReference type="FunFam" id="1.25.40.480:FF:000001">
    <property type="entry name" value="Bystin (51.6 kD)-like"/>
    <property type="match status" value="1"/>
</dbReference>
<dbReference type="InterPro" id="IPR007955">
    <property type="entry name" value="Bystin"/>
</dbReference>
<dbReference type="PANTHER" id="PTHR12821">
    <property type="entry name" value="BYSTIN"/>
    <property type="match status" value="1"/>
</dbReference>
<dbReference type="PANTHER" id="PTHR12821:SF0">
    <property type="entry name" value="BYSTIN"/>
    <property type="match status" value="1"/>
</dbReference>
<dbReference type="Pfam" id="PF05291">
    <property type="entry name" value="Bystin"/>
    <property type="match status" value="1"/>
</dbReference>
<sequence>MGKDKKDRKHKGGLTEDILEKNVTKPSKRVKHRRERQADSVESFVEEKLSKKILEQARQQQDELMEEYGFRKTGDRKTLKSAQTTLGTPDLDRIDDDDEDDSDDGASMTSETYYENVEVDEEEEKAFEMFMSQEAPTRRTLADVIMEKIQDKKTEIESHMSEQSTAPQMDERLVKVFKGVGEILKKYRSGKLPKAFKFIPSLTNWEEVLFITEPDEWSAAALFQATKIFVSNLNAKMAQRFFNLVLLPRIQDDIAEYKRLNYHLYMALKKALFKPAAFFKGILLPMCESGNCSLREAIIISSVLAKTTIPVLHSSAVILKIAEMNYSGANSIFLRTLFDKKYALPYRVIDAAVYHFLRFLTDKRTLPVLWHQCLLTFVQRYKEDISSEQKEALMELCRVHVHDKITPEVRRELVHSKSRDMETDQPMEST</sequence>
<comment type="function">
    <text evidence="1">Required for processing of 20S pre-rRNA precursor and biogenesis of 40S ribosomal subunits.</text>
</comment>
<comment type="subcellular location">
    <subcellularLocation>
        <location evidence="1">Nucleus</location>
        <location evidence="1">Nucleolus</location>
    </subcellularLocation>
</comment>
<comment type="similarity">
    <text evidence="3">Belongs to the bystin family.</text>
</comment>
<protein>
    <recommendedName>
        <fullName>Bystin</fullName>
    </recommendedName>
</protein>
<reference key="1">
    <citation type="journal article" date="2007" name="Science">
        <title>Sea anemone genome reveals ancestral eumetazoan gene repertoire and genomic organization.</title>
        <authorList>
            <person name="Putnam N.H."/>
            <person name="Srivastava M."/>
            <person name="Hellsten U."/>
            <person name="Dirks B."/>
            <person name="Chapman J."/>
            <person name="Salamov A."/>
            <person name="Terry A."/>
            <person name="Shapiro H."/>
            <person name="Lindquist E."/>
            <person name="Kapitonov V.V."/>
            <person name="Jurka J."/>
            <person name="Genikhovich G."/>
            <person name="Grigoriev I.V."/>
            <person name="Lucas S.M."/>
            <person name="Steele R.E."/>
            <person name="Finnerty J.R."/>
            <person name="Technau U."/>
            <person name="Martindale M.Q."/>
            <person name="Rokhsar D.S."/>
        </authorList>
    </citation>
    <scope>NUCLEOTIDE SEQUENCE [LARGE SCALE GENOMIC DNA]</scope>
    <source>
        <strain>CH2 X CH6</strain>
    </source>
</reference>
<gene>
    <name type="primary">bysl</name>
    <name type="ORF">v1g167370</name>
</gene>
<keyword id="KW-0539">Nucleus</keyword>
<keyword id="KW-1185">Reference proteome</keyword>
<keyword id="KW-0690">Ribosome biogenesis</keyword>
<proteinExistence type="inferred from homology"/>
<evidence type="ECO:0000250" key="1">
    <source>
        <dbReference type="UniProtKB" id="Q13895"/>
    </source>
</evidence>
<evidence type="ECO:0000256" key="2">
    <source>
        <dbReference type="SAM" id="MobiDB-lite"/>
    </source>
</evidence>
<evidence type="ECO:0000305" key="3"/>
<feature type="chain" id="PRO_0000327728" description="Bystin">
    <location>
        <begin position="1"/>
        <end position="430"/>
    </location>
</feature>
<feature type="region of interest" description="Disordered" evidence="2">
    <location>
        <begin position="1"/>
        <end position="45"/>
    </location>
</feature>
<feature type="region of interest" description="Disordered" evidence="2">
    <location>
        <begin position="65"/>
        <end position="113"/>
    </location>
</feature>
<feature type="compositionally biased region" description="Basic residues" evidence="2">
    <location>
        <begin position="1"/>
        <end position="12"/>
    </location>
</feature>
<feature type="compositionally biased region" description="Basic residues" evidence="2">
    <location>
        <begin position="26"/>
        <end position="35"/>
    </location>
</feature>
<feature type="compositionally biased region" description="Basic and acidic residues" evidence="2">
    <location>
        <begin position="68"/>
        <end position="78"/>
    </location>
</feature>
<feature type="compositionally biased region" description="Acidic residues" evidence="2">
    <location>
        <begin position="93"/>
        <end position="104"/>
    </location>
</feature>